<gene>
    <name evidence="1" type="primary">ispG</name>
    <name type="synonym">gcpE</name>
    <name type="ordered locus">HI_0368</name>
</gene>
<dbReference type="EC" id="1.17.7.3" evidence="1"/>
<dbReference type="EMBL" id="L42023">
    <property type="protein sequence ID" value="AAC22026.1"/>
    <property type="molecule type" value="Genomic_DNA"/>
</dbReference>
<dbReference type="PIR" id="H64063">
    <property type="entry name" value="H64063"/>
</dbReference>
<dbReference type="RefSeq" id="NP_438529.1">
    <property type="nucleotide sequence ID" value="NC_000907.1"/>
</dbReference>
<dbReference type="SMR" id="P44667"/>
<dbReference type="STRING" id="71421.HI_0368"/>
<dbReference type="EnsemblBacteria" id="AAC22026">
    <property type="protein sequence ID" value="AAC22026"/>
    <property type="gene ID" value="HI_0368"/>
</dbReference>
<dbReference type="KEGG" id="hin:HI_0368"/>
<dbReference type="PATRIC" id="fig|71421.8.peg.386"/>
<dbReference type="eggNOG" id="COG0821">
    <property type="taxonomic scope" value="Bacteria"/>
</dbReference>
<dbReference type="HOGENOM" id="CLU_042258_0_0_6"/>
<dbReference type="OrthoDB" id="9803214at2"/>
<dbReference type="PhylomeDB" id="P44667"/>
<dbReference type="BioCyc" id="HINF71421:G1GJ1-381-MONOMER"/>
<dbReference type="UniPathway" id="UPA00056">
    <property type="reaction ID" value="UER00096"/>
</dbReference>
<dbReference type="Proteomes" id="UP000000579">
    <property type="component" value="Chromosome"/>
</dbReference>
<dbReference type="GO" id="GO:0051539">
    <property type="term" value="F:4 iron, 4 sulfur cluster binding"/>
    <property type="evidence" value="ECO:0007669"/>
    <property type="project" value="UniProtKB-UniRule"/>
</dbReference>
<dbReference type="GO" id="GO:0046429">
    <property type="term" value="F:4-hydroxy-3-methylbut-2-en-1-yl diphosphate synthase activity (ferredoxin)"/>
    <property type="evidence" value="ECO:0000318"/>
    <property type="project" value="GO_Central"/>
</dbReference>
<dbReference type="GO" id="GO:0141197">
    <property type="term" value="F:4-hydroxy-3-methylbut-2-enyl-diphosphate synthase activity (flavodoxin)"/>
    <property type="evidence" value="ECO:0007669"/>
    <property type="project" value="UniProtKB-EC"/>
</dbReference>
<dbReference type="GO" id="GO:0005506">
    <property type="term" value="F:iron ion binding"/>
    <property type="evidence" value="ECO:0007669"/>
    <property type="project" value="InterPro"/>
</dbReference>
<dbReference type="GO" id="GO:0019288">
    <property type="term" value="P:isopentenyl diphosphate biosynthetic process, methylerythritol 4-phosphate pathway"/>
    <property type="evidence" value="ECO:0000318"/>
    <property type="project" value="GO_Central"/>
</dbReference>
<dbReference type="GO" id="GO:0016114">
    <property type="term" value="P:terpenoid biosynthetic process"/>
    <property type="evidence" value="ECO:0007669"/>
    <property type="project" value="InterPro"/>
</dbReference>
<dbReference type="FunFam" id="3.20.20.20:FF:000001">
    <property type="entry name" value="4-hydroxy-3-methylbut-2-en-1-yl diphosphate synthase (flavodoxin)"/>
    <property type="match status" value="1"/>
</dbReference>
<dbReference type="FunFam" id="3.30.413.10:FF:000002">
    <property type="entry name" value="4-hydroxy-3-methylbut-2-en-1-yl diphosphate synthase (flavodoxin)"/>
    <property type="match status" value="1"/>
</dbReference>
<dbReference type="Gene3D" id="3.20.20.20">
    <property type="entry name" value="Dihydropteroate synthase-like"/>
    <property type="match status" value="1"/>
</dbReference>
<dbReference type="Gene3D" id="3.30.413.10">
    <property type="entry name" value="Sulfite Reductase Hemoprotein, domain 1"/>
    <property type="match status" value="1"/>
</dbReference>
<dbReference type="HAMAP" id="MF_00159">
    <property type="entry name" value="IspG"/>
    <property type="match status" value="1"/>
</dbReference>
<dbReference type="InterPro" id="IPR011005">
    <property type="entry name" value="Dihydropteroate_synth-like_sf"/>
</dbReference>
<dbReference type="InterPro" id="IPR016425">
    <property type="entry name" value="IspG_bac"/>
</dbReference>
<dbReference type="InterPro" id="IPR004588">
    <property type="entry name" value="IspG_bac-typ"/>
</dbReference>
<dbReference type="InterPro" id="IPR045854">
    <property type="entry name" value="NO2/SO3_Rdtase_4Fe4S_sf"/>
</dbReference>
<dbReference type="NCBIfam" id="TIGR00612">
    <property type="entry name" value="ispG_gcpE"/>
    <property type="match status" value="1"/>
</dbReference>
<dbReference type="NCBIfam" id="NF001540">
    <property type="entry name" value="PRK00366.1"/>
    <property type="match status" value="1"/>
</dbReference>
<dbReference type="PANTHER" id="PTHR30454">
    <property type="entry name" value="4-HYDROXY-3-METHYLBUT-2-EN-1-YL DIPHOSPHATE SYNTHASE"/>
    <property type="match status" value="1"/>
</dbReference>
<dbReference type="PANTHER" id="PTHR30454:SF0">
    <property type="entry name" value="4-HYDROXY-3-METHYLBUT-2-EN-1-YL DIPHOSPHATE SYNTHASE (FERREDOXIN), CHLOROPLASTIC"/>
    <property type="match status" value="1"/>
</dbReference>
<dbReference type="Pfam" id="PF04551">
    <property type="entry name" value="GcpE"/>
    <property type="match status" value="1"/>
</dbReference>
<dbReference type="PIRSF" id="PIRSF004640">
    <property type="entry name" value="IspG"/>
    <property type="match status" value="1"/>
</dbReference>
<dbReference type="SUPFAM" id="SSF51717">
    <property type="entry name" value="Dihydropteroate synthetase-like"/>
    <property type="match status" value="1"/>
</dbReference>
<dbReference type="SUPFAM" id="SSF56014">
    <property type="entry name" value="Nitrite and sulphite reductase 4Fe-4S domain-like"/>
    <property type="match status" value="1"/>
</dbReference>
<protein>
    <recommendedName>
        <fullName evidence="1">4-hydroxy-3-methylbut-2-en-1-yl diphosphate synthase (flavodoxin)</fullName>
        <ecNumber evidence="1">1.17.7.3</ecNumber>
    </recommendedName>
    <alternativeName>
        <fullName evidence="1">1-hydroxy-2-methyl-2-(E)-butenyl 4-diphosphate synthase</fullName>
    </alternativeName>
</protein>
<name>ISPG_HAEIN</name>
<proteinExistence type="inferred from homology"/>
<organism>
    <name type="scientific">Haemophilus influenzae (strain ATCC 51907 / DSM 11121 / KW20 / Rd)</name>
    <dbReference type="NCBI Taxonomy" id="71421"/>
    <lineage>
        <taxon>Bacteria</taxon>
        <taxon>Pseudomonadati</taxon>
        <taxon>Pseudomonadota</taxon>
        <taxon>Gammaproteobacteria</taxon>
        <taxon>Pasteurellales</taxon>
        <taxon>Pasteurellaceae</taxon>
        <taxon>Haemophilus</taxon>
    </lineage>
</organism>
<evidence type="ECO:0000255" key="1">
    <source>
        <dbReference type="HAMAP-Rule" id="MF_00159"/>
    </source>
</evidence>
<feature type="chain" id="PRO_0000190585" description="4-hydroxy-3-methylbut-2-en-1-yl diphosphate synthase (flavodoxin)">
    <location>
        <begin position="1"/>
        <end position="368"/>
    </location>
</feature>
<feature type="binding site" evidence="1">
    <location>
        <position position="271"/>
    </location>
    <ligand>
        <name>[4Fe-4S] cluster</name>
        <dbReference type="ChEBI" id="CHEBI:49883"/>
    </ligand>
</feature>
<feature type="binding site" evidence="1">
    <location>
        <position position="274"/>
    </location>
    <ligand>
        <name>[4Fe-4S] cluster</name>
        <dbReference type="ChEBI" id="CHEBI:49883"/>
    </ligand>
</feature>
<feature type="binding site" evidence="1">
    <location>
        <position position="306"/>
    </location>
    <ligand>
        <name>[4Fe-4S] cluster</name>
        <dbReference type="ChEBI" id="CHEBI:49883"/>
    </ligand>
</feature>
<feature type="binding site" evidence="1">
    <location>
        <position position="313"/>
    </location>
    <ligand>
        <name>[4Fe-4S] cluster</name>
        <dbReference type="ChEBI" id="CHEBI:49883"/>
    </ligand>
</feature>
<sequence>MSAFQPTIKRRESTKIYVGNVPIGGDAPIAVQSMTNTRTTDVEATVAQIKSLERVGADIVRVSVPTMDAAEAFKQIKQQVNVPLVADIHFDYRIALKVAEYGVDCLRINPGNIGREDRVRAVVDCARDKNIPIRIGVNAGSLEKDLQEKYGEPTPEALLESALRHVEILDRLNFDQFKVSVKASDVFLAVESYRLLAKAIKQPLHLGITEAGGARAGAVKSAVGLGMLLAEGIGDTLRVSLAADPVEEIKVGFDILKSLRIRSRGINFIACPTCSRQEFDVIGTVNALEQRLEDIITPMDVSIIGCVVNGPGEALVSDLGVTGGNKKSGYYLDGERQKERFDNEDIVNQLEAKIRAKVARQDPKNRII</sequence>
<reference key="1">
    <citation type="journal article" date="1995" name="Science">
        <title>Whole-genome random sequencing and assembly of Haemophilus influenzae Rd.</title>
        <authorList>
            <person name="Fleischmann R.D."/>
            <person name="Adams M.D."/>
            <person name="White O."/>
            <person name="Clayton R.A."/>
            <person name="Kirkness E.F."/>
            <person name="Kerlavage A.R."/>
            <person name="Bult C.J."/>
            <person name="Tomb J.-F."/>
            <person name="Dougherty B.A."/>
            <person name="Merrick J.M."/>
            <person name="McKenney K."/>
            <person name="Sutton G.G."/>
            <person name="FitzHugh W."/>
            <person name="Fields C.A."/>
            <person name="Gocayne J.D."/>
            <person name="Scott J.D."/>
            <person name="Shirley R."/>
            <person name="Liu L.-I."/>
            <person name="Glodek A."/>
            <person name="Kelley J.M."/>
            <person name="Weidman J.F."/>
            <person name="Phillips C.A."/>
            <person name="Spriggs T."/>
            <person name="Hedblom E."/>
            <person name="Cotton M.D."/>
            <person name="Utterback T.R."/>
            <person name="Hanna M.C."/>
            <person name="Nguyen D.T."/>
            <person name="Saudek D.M."/>
            <person name="Brandon R.C."/>
            <person name="Fine L.D."/>
            <person name="Fritchman J.L."/>
            <person name="Fuhrmann J.L."/>
            <person name="Geoghagen N.S.M."/>
            <person name="Gnehm C.L."/>
            <person name="McDonald L.A."/>
            <person name="Small K.V."/>
            <person name="Fraser C.M."/>
            <person name="Smith H.O."/>
            <person name="Venter J.C."/>
        </authorList>
    </citation>
    <scope>NUCLEOTIDE SEQUENCE [LARGE SCALE GENOMIC DNA]</scope>
    <source>
        <strain>ATCC 51907 / DSM 11121 / KW20 / Rd</strain>
    </source>
</reference>
<accession>P44667</accession>
<comment type="function">
    <text evidence="1">Converts 2C-methyl-D-erythritol 2,4-cyclodiphosphate (ME-2,4cPP) into 1-hydroxy-2-methyl-2-(E)-butenyl 4-diphosphate.</text>
</comment>
<comment type="catalytic activity">
    <reaction evidence="1">
        <text>(2E)-4-hydroxy-3-methylbut-2-enyl diphosphate + oxidized [flavodoxin] + H2O + 2 H(+) = 2-C-methyl-D-erythritol 2,4-cyclic diphosphate + reduced [flavodoxin]</text>
        <dbReference type="Rhea" id="RHEA:43604"/>
        <dbReference type="Rhea" id="RHEA-COMP:10622"/>
        <dbReference type="Rhea" id="RHEA-COMP:10623"/>
        <dbReference type="ChEBI" id="CHEBI:15377"/>
        <dbReference type="ChEBI" id="CHEBI:15378"/>
        <dbReference type="ChEBI" id="CHEBI:57618"/>
        <dbReference type="ChEBI" id="CHEBI:58210"/>
        <dbReference type="ChEBI" id="CHEBI:58483"/>
        <dbReference type="ChEBI" id="CHEBI:128753"/>
        <dbReference type="EC" id="1.17.7.3"/>
    </reaction>
</comment>
<comment type="cofactor">
    <cofactor evidence="1">
        <name>[4Fe-4S] cluster</name>
        <dbReference type="ChEBI" id="CHEBI:49883"/>
    </cofactor>
    <text evidence="1">Binds 1 [4Fe-4S] cluster.</text>
</comment>
<comment type="pathway">
    <text evidence="1">Isoprenoid biosynthesis; isopentenyl diphosphate biosynthesis via DXP pathway; isopentenyl diphosphate from 1-deoxy-D-xylulose 5-phosphate: step 5/6.</text>
</comment>
<comment type="similarity">
    <text evidence="1">Belongs to the IspG family.</text>
</comment>
<keyword id="KW-0004">4Fe-4S</keyword>
<keyword id="KW-0408">Iron</keyword>
<keyword id="KW-0411">Iron-sulfur</keyword>
<keyword id="KW-0414">Isoprene biosynthesis</keyword>
<keyword id="KW-0479">Metal-binding</keyword>
<keyword id="KW-0560">Oxidoreductase</keyword>
<keyword id="KW-1185">Reference proteome</keyword>